<organism>
    <name type="scientific">Pelotomaculum thermopropionicum (strain DSM 13744 / JCM 10971 / SI)</name>
    <dbReference type="NCBI Taxonomy" id="370438"/>
    <lineage>
        <taxon>Bacteria</taxon>
        <taxon>Bacillati</taxon>
        <taxon>Bacillota</taxon>
        <taxon>Clostridia</taxon>
        <taxon>Eubacteriales</taxon>
        <taxon>Desulfotomaculaceae</taxon>
        <taxon>Pelotomaculum</taxon>
    </lineage>
</organism>
<name>MIAB_PELTS</name>
<comment type="function">
    <text evidence="1">Catalyzes the methylthiolation of N6-(dimethylallyl)adenosine (i(6)A), leading to the formation of 2-methylthio-N6-(dimethylallyl)adenosine (ms(2)i(6)A) at position 37 in tRNAs that read codons beginning with uridine.</text>
</comment>
<comment type="catalytic activity">
    <reaction evidence="1">
        <text>N(6)-dimethylallyladenosine(37) in tRNA + (sulfur carrier)-SH + AH2 + 2 S-adenosyl-L-methionine = 2-methylsulfanyl-N(6)-dimethylallyladenosine(37) in tRNA + (sulfur carrier)-H + 5'-deoxyadenosine + L-methionine + A + S-adenosyl-L-homocysteine + 2 H(+)</text>
        <dbReference type="Rhea" id="RHEA:37067"/>
        <dbReference type="Rhea" id="RHEA-COMP:10375"/>
        <dbReference type="Rhea" id="RHEA-COMP:10376"/>
        <dbReference type="Rhea" id="RHEA-COMP:14737"/>
        <dbReference type="Rhea" id="RHEA-COMP:14739"/>
        <dbReference type="ChEBI" id="CHEBI:13193"/>
        <dbReference type="ChEBI" id="CHEBI:15378"/>
        <dbReference type="ChEBI" id="CHEBI:17319"/>
        <dbReference type="ChEBI" id="CHEBI:17499"/>
        <dbReference type="ChEBI" id="CHEBI:29917"/>
        <dbReference type="ChEBI" id="CHEBI:57844"/>
        <dbReference type="ChEBI" id="CHEBI:57856"/>
        <dbReference type="ChEBI" id="CHEBI:59789"/>
        <dbReference type="ChEBI" id="CHEBI:64428"/>
        <dbReference type="ChEBI" id="CHEBI:74415"/>
        <dbReference type="ChEBI" id="CHEBI:74417"/>
        <dbReference type="EC" id="2.8.4.3"/>
    </reaction>
</comment>
<comment type="cofactor">
    <cofactor evidence="1">
        <name>[4Fe-4S] cluster</name>
        <dbReference type="ChEBI" id="CHEBI:49883"/>
    </cofactor>
    <text evidence="1">Binds 2 [4Fe-4S] clusters. One cluster is coordinated with 3 cysteines and an exchangeable S-adenosyl-L-methionine.</text>
</comment>
<comment type="subunit">
    <text evidence="1">Monomer.</text>
</comment>
<comment type="subcellular location">
    <subcellularLocation>
        <location evidence="1">Cytoplasm</location>
    </subcellularLocation>
</comment>
<comment type="similarity">
    <text evidence="1">Belongs to the methylthiotransferase family. MiaB subfamily.</text>
</comment>
<protein>
    <recommendedName>
        <fullName evidence="1">tRNA-2-methylthio-N(6)-dimethylallyladenosine synthase</fullName>
        <ecNumber evidence="1">2.8.4.3</ecNumber>
    </recommendedName>
    <alternativeName>
        <fullName evidence="1">(Dimethylallyl)adenosine tRNA methylthiotransferase MiaB</fullName>
    </alternativeName>
    <alternativeName>
        <fullName evidence="1">tRNA-i(6)A37 methylthiotransferase</fullName>
    </alternativeName>
</protein>
<dbReference type="EC" id="2.8.4.3" evidence="1"/>
<dbReference type="EMBL" id="AP009389">
    <property type="protein sequence ID" value="BAF59519.1"/>
    <property type="molecule type" value="Genomic_DNA"/>
</dbReference>
<dbReference type="SMR" id="A5D2K1"/>
<dbReference type="STRING" id="370438.PTH_1338"/>
<dbReference type="KEGG" id="pth:PTH_1338"/>
<dbReference type="eggNOG" id="COG0621">
    <property type="taxonomic scope" value="Bacteria"/>
</dbReference>
<dbReference type="HOGENOM" id="CLU_018697_2_0_9"/>
<dbReference type="Proteomes" id="UP000006556">
    <property type="component" value="Chromosome"/>
</dbReference>
<dbReference type="GO" id="GO:0005829">
    <property type="term" value="C:cytosol"/>
    <property type="evidence" value="ECO:0007669"/>
    <property type="project" value="TreeGrafter"/>
</dbReference>
<dbReference type="GO" id="GO:0051539">
    <property type="term" value="F:4 iron, 4 sulfur cluster binding"/>
    <property type="evidence" value="ECO:0007669"/>
    <property type="project" value="UniProtKB-UniRule"/>
</dbReference>
<dbReference type="GO" id="GO:0046872">
    <property type="term" value="F:metal ion binding"/>
    <property type="evidence" value="ECO:0007669"/>
    <property type="project" value="UniProtKB-KW"/>
</dbReference>
<dbReference type="GO" id="GO:0035597">
    <property type="term" value="F:N6-isopentenyladenosine methylthiotransferase activity"/>
    <property type="evidence" value="ECO:0007669"/>
    <property type="project" value="TreeGrafter"/>
</dbReference>
<dbReference type="CDD" id="cd01335">
    <property type="entry name" value="Radical_SAM"/>
    <property type="match status" value="1"/>
</dbReference>
<dbReference type="FunFam" id="3.40.50.12160:FF:000006">
    <property type="entry name" value="tRNA-2-methylthio-N(6)-dimethylallyladenosine synthase"/>
    <property type="match status" value="1"/>
</dbReference>
<dbReference type="FunFam" id="3.80.30.20:FF:000001">
    <property type="entry name" value="tRNA-2-methylthio-N(6)-dimethylallyladenosine synthase 2"/>
    <property type="match status" value="1"/>
</dbReference>
<dbReference type="Gene3D" id="3.40.50.12160">
    <property type="entry name" value="Methylthiotransferase, N-terminal domain"/>
    <property type="match status" value="1"/>
</dbReference>
<dbReference type="Gene3D" id="3.80.30.20">
    <property type="entry name" value="tm_1862 like domain"/>
    <property type="match status" value="1"/>
</dbReference>
<dbReference type="HAMAP" id="MF_01864">
    <property type="entry name" value="tRNA_metthiotr_MiaB"/>
    <property type="match status" value="1"/>
</dbReference>
<dbReference type="InterPro" id="IPR006638">
    <property type="entry name" value="Elp3/MiaA/NifB-like_rSAM"/>
</dbReference>
<dbReference type="InterPro" id="IPR005839">
    <property type="entry name" value="Methylthiotransferase"/>
</dbReference>
<dbReference type="InterPro" id="IPR020612">
    <property type="entry name" value="Methylthiotransferase_CS"/>
</dbReference>
<dbReference type="InterPro" id="IPR013848">
    <property type="entry name" value="Methylthiotransferase_N"/>
</dbReference>
<dbReference type="InterPro" id="IPR038135">
    <property type="entry name" value="Methylthiotransferase_N_sf"/>
</dbReference>
<dbReference type="InterPro" id="IPR006463">
    <property type="entry name" value="MiaB_methiolase"/>
</dbReference>
<dbReference type="InterPro" id="IPR007197">
    <property type="entry name" value="rSAM"/>
</dbReference>
<dbReference type="InterPro" id="IPR023404">
    <property type="entry name" value="rSAM_horseshoe"/>
</dbReference>
<dbReference type="InterPro" id="IPR002792">
    <property type="entry name" value="TRAM_dom"/>
</dbReference>
<dbReference type="NCBIfam" id="TIGR01574">
    <property type="entry name" value="miaB-methiolase"/>
    <property type="match status" value="1"/>
</dbReference>
<dbReference type="NCBIfam" id="TIGR00089">
    <property type="entry name" value="MiaB/RimO family radical SAM methylthiotransferase"/>
    <property type="match status" value="1"/>
</dbReference>
<dbReference type="PANTHER" id="PTHR43020">
    <property type="entry name" value="CDK5 REGULATORY SUBUNIT-ASSOCIATED PROTEIN 1"/>
    <property type="match status" value="1"/>
</dbReference>
<dbReference type="PANTHER" id="PTHR43020:SF2">
    <property type="entry name" value="MITOCHONDRIAL TRNA METHYLTHIOTRANSFERASE CDK5RAP1"/>
    <property type="match status" value="1"/>
</dbReference>
<dbReference type="Pfam" id="PF04055">
    <property type="entry name" value="Radical_SAM"/>
    <property type="match status" value="1"/>
</dbReference>
<dbReference type="Pfam" id="PF01938">
    <property type="entry name" value="TRAM"/>
    <property type="match status" value="1"/>
</dbReference>
<dbReference type="Pfam" id="PF00919">
    <property type="entry name" value="UPF0004"/>
    <property type="match status" value="1"/>
</dbReference>
<dbReference type="SFLD" id="SFLDF00273">
    <property type="entry name" value="(dimethylallyl)adenosine_tRNA"/>
    <property type="match status" value="1"/>
</dbReference>
<dbReference type="SFLD" id="SFLDG01082">
    <property type="entry name" value="B12-binding_domain_containing"/>
    <property type="match status" value="1"/>
</dbReference>
<dbReference type="SFLD" id="SFLDS00029">
    <property type="entry name" value="Radical_SAM"/>
    <property type="match status" value="1"/>
</dbReference>
<dbReference type="SMART" id="SM00729">
    <property type="entry name" value="Elp3"/>
    <property type="match status" value="1"/>
</dbReference>
<dbReference type="SUPFAM" id="SSF102114">
    <property type="entry name" value="Radical SAM enzymes"/>
    <property type="match status" value="1"/>
</dbReference>
<dbReference type="PROSITE" id="PS51449">
    <property type="entry name" value="MTTASE_N"/>
    <property type="match status" value="1"/>
</dbReference>
<dbReference type="PROSITE" id="PS01278">
    <property type="entry name" value="MTTASE_RADICAL"/>
    <property type="match status" value="1"/>
</dbReference>
<dbReference type="PROSITE" id="PS51918">
    <property type="entry name" value="RADICAL_SAM"/>
    <property type="match status" value="1"/>
</dbReference>
<dbReference type="PROSITE" id="PS50926">
    <property type="entry name" value="TRAM"/>
    <property type="match status" value="1"/>
</dbReference>
<reference key="1">
    <citation type="journal article" date="2008" name="Genome Res.">
        <title>The genome of Pelotomaculum thermopropionicum reveals niche-associated evolution in anaerobic microbiota.</title>
        <authorList>
            <person name="Kosaka T."/>
            <person name="Kato S."/>
            <person name="Shimoyama T."/>
            <person name="Ishii S."/>
            <person name="Abe T."/>
            <person name="Watanabe K."/>
        </authorList>
    </citation>
    <scope>NUCLEOTIDE SEQUENCE [LARGE SCALE GENOMIC DNA]</scope>
    <source>
        <strain>DSM 13744 / JCM 10971 / SI</strain>
    </source>
</reference>
<accession>A5D2K1</accession>
<gene>
    <name evidence="1" type="primary">miaB</name>
    <name type="ordered locus">PTH_1338</name>
</gene>
<sequence>MKKYRIIVFGCQMNEHDSEVLAGILESMGYCQAGNSEDPDIILINTCCVRKTAENKVFSLLGRLRRQKAQNPNLIIGVCGCMPQQEGMAERIKQLFPHVDLIFGTHNVHQLPELIGKVIEGQKQVLEIWPGYGGELREELPVKRKEGVRAWVTIMYGCNNFCTYCIVPYVRGREKSRSPEAVYEEVARLAGEGFKEVILLGQNVNSYGKDLGVKTDFASLLESLENIDGIDRIRYMTSHPRDFSLRLVEAIAASKKVCEHFHLPVQAGSNRILKKMNRGYTREEYVDLIRYIKSLIPHATVTTDIMVGFPGETDEDFNDTLDLVREIRFDSAYTFVYNIRPGTPAAEMPDQVAENVKKERIQALIKLQNKISLERNEEEVGQTQEVLVEGEKDRGSGFIYGRNRGNKTVIFSGDPSLVGKVVPVTVTGARLAHLTGILSYNYHQEGSR</sequence>
<evidence type="ECO:0000255" key="1">
    <source>
        <dbReference type="HAMAP-Rule" id="MF_01864"/>
    </source>
</evidence>
<evidence type="ECO:0000255" key="2">
    <source>
        <dbReference type="PROSITE-ProRule" id="PRU01266"/>
    </source>
</evidence>
<keyword id="KW-0004">4Fe-4S</keyword>
<keyword id="KW-0963">Cytoplasm</keyword>
<keyword id="KW-0408">Iron</keyword>
<keyword id="KW-0411">Iron-sulfur</keyword>
<keyword id="KW-0479">Metal-binding</keyword>
<keyword id="KW-1185">Reference proteome</keyword>
<keyword id="KW-0949">S-adenosyl-L-methionine</keyword>
<keyword id="KW-0808">Transferase</keyword>
<keyword id="KW-0819">tRNA processing</keyword>
<feature type="chain" id="PRO_0000374432" description="tRNA-2-methylthio-N(6)-dimethylallyladenosine synthase">
    <location>
        <begin position="1"/>
        <end position="448"/>
    </location>
</feature>
<feature type="domain" description="MTTase N-terminal" evidence="1">
    <location>
        <begin position="2"/>
        <end position="120"/>
    </location>
</feature>
<feature type="domain" description="Radical SAM core" evidence="2">
    <location>
        <begin position="144"/>
        <end position="374"/>
    </location>
</feature>
<feature type="domain" description="TRAM" evidence="1">
    <location>
        <begin position="377"/>
        <end position="440"/>
    </location>
</feature>
<feature type="binding site" evidence="1">
    <location>
        <position position="11"/>
    </location>
    <ligand>
        <name>[4Fe-4S] cluster</name>
        <dbReference type="ChEBI" id="CHEBI:49883"/>
        <label>1</label>
    </ligand>
</feature>
<feature type="binding site" evidence="1">
    <location>
        <position position="47"/>
    </location>
    <ligand>
        <name>[4Fe-4S] cluster</name>
        <dbReference type="ChEBI" id="CHEBI:49883"/>
        <label>1</label>
    </ligand>
</feature>
<feature type="binding site" evidence="1">
    <location>
        <position position="81"/>
    </location>
    <ligand>
        <name>[4Fe-4S] cluster</name>
        <dbReference type="ChEBI" id="CHEBI:49883"/>
        <label>1</label>
    </ligand>
</feature>
<feature type="binding site" evidence="1">
    <location>
        <position position="158"/>
    </location>
    <ligand>
        <name>[4Fe-4S] cluster</name>
        <dbReference type="ChEBI" id="CHEBI:49883"/>
        <label>2</label>
        <note>4Fe-4S-S-AdoMet</note>
    </ligand>
</feature>
<feature type="binding site" evidence="1">
    <location>
        <position position="162"/>
    </location>
    <ligand>
        <name>[4Fe-4S] cluster</name>
        <dbReference type="ChEBI" id="CHEBI:49883"/>
        <label>2</label>
        <note>4Fe-4S-S-AdoMet</note>
    </ligand>
</feature>
<feature type="binding site" evidence="1">
    <location>
        <position position="165"/>
    </location>
    <ligand>
        <name>[4Fe-4S] cluster</name>
        <dbReference type="ChEBI" id="CHEBI:49883"/>
        <label>2</label>
        <note>4Fe-4S-S-AdoMet</note>
    </ligand>
</feature>
<proteinExistence type="inferred from homology"/>